<protein>
    <recommendedName>
        <fullName>RNA-binding E3 ubiquitin-protein ligase MEX3C</fullName>
        <ecNumber>2.3.2.27</ecNumber>
    </recommendedName>
    <alternativeName>
        <fullName>RING finger and KH domain-containing protein 2</fullName>
    </alternativeName>
    <alternativeName>
        <fullName evidence="6">RING-type E3 ubiquitin transferase MEX3C</fullName>
    </alternativeName>
</protein>
<comment type="function">
    <text evidence="1">RNA-binding protein. May be involved in post-transcriptional regulatory mechanisms, modulating levels of some mRNAs by promoting their degradation in a way involving ubiquitin ligase activity. May act as suppressor of replication stress and chromosome missegregation.</text>
</comment>
<comment type="catalytic activity">
    <reaction>
        <text>S-ubiquitinyl-[E2 ubiquitin-conjugating enzyme]-L-cysteine + [acceptor protein]-L-lysine = [E2 ubiquitin-conjugating enzyme]-L-cysteine + N(6)-ubiquitinyl-[acceptor protein]-L-lysine.</text>
        <dbReference type="EC" id="2.3.2.27"/>
    </reaction>
</comment>
<comment type="subunit">
    <text evidence="1">Interacts with USP7, which antagonizes the ability to degrade mRNA.</text>
</comment>
<comment type="subcellular location">
    <subcellularLocation>
        <location evidence="1">Nucleus</location>
    </subcellularLocation>
    <subcellularLocation>
        <location evidence="1">Cytoplasm</location>
    </subcellularLocation>
    <text>Predominantly expressed in the cytoplasm and shuttles between the cytoplasm and the nucleus through the CRM1 export pathway.</text>
</comment>
<comment type="domain">
    <text evidence="1">Binds RNA through its KH domains.</text>
</comment>
<comment type="PTM">
    <text evidence="1">Phosphorylated.</text>
</comment>
<comment type="sequence caution" evidence="6">
    <conflict type="erroneous initiation">
        <sequence resource="EMBL-CDS" id="AAI25428"/>
    </conflict>
    <text>Truncated N-terminus.</text>
</comment>
<organism>
    <name type="scientific">Mus musculus</name>
    <name type="common">Mouse</name>
    <dbReference type="NCBI Taxonomy" id="10090"/>
    <lineage>
        <taxon>Eukaryota</taxon>
        <taxon>Metazoa</taxon>
        <taxon>Chordata</taxon>
        <taxon>Craniata</taxon>
        <taxon>Vertebrata</taxon>
        <taxon>Euteleostomi</taxon>
        <taxon>Mammalia</taxon>
        <taxon>Eutheria</taxon>
        <taxon>Euarchontoglires</taxon>
        <taxon>Glires</taxon>
        <taxon>Rodentia</taxon>
        <taxon>Myomorpha</taxon>
        <taxon>Muroidea</taxon>
        <taxon>Muridae</taxon>
        <taxon>Murinae</taxon>
        <taxon>Mus</taxon>
        <taxon>Mus</taxon>
    </lineage>
</organism>
<feature type="chain" id="PRO_0000278783" description="RNA-binding E3 ubiquitin-protein ligase MEX3C">
    <location>
        <begin position="1"/>
        <end position="652"/>
    </location>
</feature>
<feature type="domain" description="KH 1" evidence="3">
    <location>
        <begin position="225"/>
        <end position="286"/>
    </location>
</feature>
<feature type="domain" description="KH 2" evidence="3">
    <location>
        <begin position="319"/>
        <end position="380"/>
    </location>
</feature>
<feature type="zinc finger region" description="RING-type" evidence="4">
    <location>
        <begin position="601"/>
        <end position="641"/>
    </location>
</feature>
<feature type="region of interest" description="Disordered" evidence="5">
    <location>
        <begin position="15"/>
        <end position="39"/>
    </location>
</feature>
<feature type="region of interest" description="Disordered" evidence="5">
    <location>
        <begin position="80"/>
        <end position="136"/>
    </location>
</feature>
<feature type="region of interest" description="Disordered" evidence="5">
    <location>
        <begin position="429"/>
        <end position="448"/>
    </location>
</feature>
<feature type="region of interest" description="Disordered" evidence="5">
    <location>
        <begin position="506"/>
        <end position="566"/>
    </location>
</feature>
<feature type="compositionally biased region" description="Pro residues" evidence="5">
    <location>
        <begin position="18"/>
        <end position="33"/>
    </location>
</feature>
<feature type="compositionally biased region" description="Acidic residues" evidence="5">
    <location>
        <begin position="101"/>
        <end position="134"/>
    </location>
</feature>
<feature type="compositionally biased region" description="Low complexity" evidence="5">
    <location>
        <begin position="430"/>
        <end position="448"/>
    </location>
</feature>
<feature type="compositionally biased region" description="Polar residues" evidence="5">
    <location>
        <begin position="519"/>
        <end position="537"/>
    </location>
</feature>
<feature type="compositionally biased region" description="Basic and acidic residues" evidence="5">
    <location>
        <begin position="544"/>
        <end position="555"/>
    </location>
</feature>
<feature type="modified residue" description="Phosphoserine" evidence="2">
    <location>
        <position position="530"/>
    </location>
</feature>
<feature type="modified residue" description="Phosphoserine" evidence="2">
    <location>
        <position position="538"/>
    </location>
</feature>
<reference key="1">
    <citation type="journal article" date="2009" name="PLoS Biol.">
        <title>Lineage-specific biology revealed by a finished genome assembly of the mouse.</title>
        <authorList>
            <person name="Church D.M."/>
            <person name="Goodstadt L."/>
            <person name="Hillier L.W."/>
            <person name="Zody M.C."/>
            <person name="Goldstein S."/>
            <person name="She X."/>
            <person name="Bult C.J."/>
            <person name="Agarwala R."/>
            <person name="Cherry J.L."/>
            <person name="DiCuccio M."/>
            <person name="Hlavina W."/>
            <person name="Kapustin Y."/>
            <person name="Meric P."/>
            <person name="Maglott D."/>
            <person name="Birtle Z."/>
            <person name="Marques A.C."/>
            <person name="Graves T."/>
            <person name="Zhou S."/>
            <person name="Teague B."/>
            <person name="Potamousis K."/>
            <person name="Churas C."/>
            <person name="Place M."/>
            <person name="Herschleb J."/>
            <person name="Runnheim R."/>
            <person name="Forrest D."/>
            <person name="Amos-Landgraf J."/>
            <person name="Schwartz D.C."/>
            <person name="Cheng Z."/>
            <person name="Lindblad-Toh K."/>
            <person name="Eichler E.E."/>
            <person name="Ponting C.P."/>
        </authorList>
    </citation>
    <scope>NUCLEOTIDE SEQUENCE [LARGE SCALE GENOMIC DNA]</scope>
    <source>
        <strain>C57BL/6J</strain>
    </source>
</reference>
<reference key="2">
    <citation type="journal article" date="2004" name="Genome Res.">
        <title>The status, quality, and expansion of the NIH full-length cDNA project: the Mammalian Gene Collection (MGC).</title>
        <authorList>
            <consortium name="The MGC Project Team"/>
        </authorList>
    </citation>
    <scope>NUCLEOTIDE SEQUENCE [LARGE SCALE MRNA] OF 128-652</scope>
    <source>
        <tissue>Brain</tissue>
    </source>
</reference>
<sequence>MPSGSSAALALALAAAPAPLPQPPPLPPPPPAGGPELEGDGLLLRERLAALGLDDPSPAEPGAPALRAAAVAAAAAAQCQARRATGLAPEEPGRLATSETAELELEVDEEEGEEAELDGELLEEEELEEAEEEDRPSLLLLSPPAATASQTQPIPGGPLGSVLLPAAGFDAREAAAAGVLYGGDDAQGMMAAMLSHAYGPGGGGAAAAALNGEQAALLRRKSVNTTECVPVPSSEHVAEIVGRQGCKIKALRAKTNTYIKTPVRGEEPIFVVTGRKEDVAMAKREILSAAEHFSMIRASRNKNGPALGGLSCSPNLPGQTTVQVRVPYRVVGLVVGPKGATIKRIQQQTHTYIVTPSRDKEPVFEVTGMPENVDRAREEIEMHIAMRTGNYIELNEENDFHYNGTDVSFEGGTLGSAWLSSNPVPPSRARMMSNYRNDSSSSLGSGSTDSYFGSNRLADFSPTSPFSTGNFWFGDTLPSVGSEDLTVDSPAFDSLPTSAQTIWTPFEPVNPLSGFGSDPSGNMKTQRRGSQPSTPRLSPTFPESIEHPLARRVRSDPPSTGNHVGLPIYIPAFSNGTNSYSSSNGGSTSSSPPESRRKHDCVICFENEVIAALVPCGHNLFCMECANKICEKRTPSCPVCQTAVTQAIQIHS</sequence>
<gene>
    <name type="primary">Mex3c</name>
    <name type="synonym">Rkhd2</name>
</gene>
<proteinExistence type="evidence at transcript level"/>
<name>MEX3C_MOUSE</name>
<evidence type="ECO:0000250" key="1"/>
<evidence type="ECO:0000250" key="2">
    <source>
        <dbReference type="UniProtKB" id="Q5U5Q3"/>
    </source>
</evidence>
<evidence type="ECO:0000255" key="3">
    <source>
        <dbReference type="PROSITE-ProRule" id="PRU00117"/>
    </source>
</evidence>
<evidence type="ECO:0000255" key="4">
    <source>
        <dbReference type="PROSITE-ProRule" id="PRU00175"/>
    </source>
</evidence>
<evidence type="ECO:0000256" key="5">
    <source>
        <dbReference type="SAM" id="MobiDB-lite"/>
    </source>
</evidence>
<evidence type="ECO:0000305" key="6"/>
<dbReference type="EC" id="2.3.2.27"/>
<dbReference type="EMBL" id="AC134447">
    <property type="status" value="NOT_ANNOTATED_CDS"/>
    <property type="molecule type" value="Genomic_DNA"/>
</dbReference>
<dbReference type="EMBL" id="BC108422">
    <property type="protein sequence ID" value="AAI08423.1"/>
    <property type="molecule type" value="mRNA"/>
</dbReference>
<dbReference type="EMBL" id="BC125427">
    <property type="protein sequence ID" value="AAI25428.1"/>
    <property type="status" value="ALT_INIT"/>
    <property type="molecule type" value="mRNA"/>
</dbReference>
<dbReference type="CCDS" id="CCDS50318.1"/>
<dbReference type="RefSeq" id="NP_001034303.3">
    <property type="nucleotide sequence ID" value="NM_001039214.4"/>
</dbReference>
<dbReference type="SMR" id="Q05A36"/>
<dbReference type="FunCoup" id="Q05A36">
    <property type="interactions" value="3352"/>
</dbReference>
<dbReference type="STRING" id="10090.ENSMUSP00000089463"/>
<dbReference type="iPTMnet" id="Q05A36"/>
<dbReference type="PhosphoSitePlus" id="Q05A36"/>
<dbReference type="SwissPalm" id="Q05A36"/>
<dbReference type="jPOST" id="Q05A36"/>
<dbReference type="PaxDb" id="10090-ENSMUSP00000089463"/>
<dbReference type="ProteomicsDB" id="292302"/>
<dbReference type="Pumba" id="Q05A36"/>
<dbReference type="Antibodypedia" id="22729">
    <property type="antibodies" value="139 antibodies from 30 providers"/>
</dbReference>
<dbReference type="Ensembl" id="ENSMUST00000091852.5">
    <property type="protein sequence ID" value="ENSMUSP00000089463.5"/>
    <property type="gene ID" value="ENSMUSG00000037253.9"/>
</dbReference>
<dbReference type="GeneID" id="240396"/>
<dbReference type="KEGG" id="mmu:240396"/>
<dbReference type="UCSC" id="uc008fot.2">
    <property type="organism name" value="mouse"/>
</dbReference>
<dbReference type="AGR" id="MGI:2652843"/>
<dbReference type="CTD" id="51320"/>
<dbReference type="MGI" id="MGI:2652843">
    <property type="gene designation" value="Mex3c"/>
</dbReference>
<dbReference type="VEuPathDB" id="HostDB:ENSMUSG00000037253"/>
<dbReference type="eggNOG" id="KOG2113">
    <property type="taxonomic scope" value="Eukaryota"/>
</dbReference>
<dbReference type="GeneTree" id="ENSGT00940000160973"/>
<dbReference type="HOGENOM" id="CLU_025598_2_0_1"/>
<dbReference type="InParanoid" id="Q05A36"/>
<dbReference type="OMA" id="GLPCNPN"/>
<dbReference type="OrthoDB" id="427410at2759"/>
<dbReference type="PhylomeDB" id="Q05A36"/>
<dbReference type="TreeFam" id="TF315107"/>
<dbReference type="Reactome" id="R-MMU-983168">
    <property type="pathway name" value="Antigen processing: Ubiquitination &amp; Proteasome degradation"/>
</dbReference>
<dbReference type="BioGRID-ORCS" id="240396">
    <property type="hits" value="7 hits in 77 CRISPR screens"/>
</dbReference>
<dbReference type="ChiTaRS" id="Mex3c">
    <property type="organism name" value="mouse"/>
</dbReference>
<dbReference type="PRO" id="PR:Q05A36"/>
<dbReference type="Proteomes" id="UP000000589">
    <property type="component" value="Chromosome 18"/>
</dbReference>
<dbReference type="RNAct" id="Q05A36">
    <property type="molecule type" value="protein"/>
</dbReference>
<dbReference type="Bgee" id="ENSMUSG00000037253">
    <property type="expression patterns" value="Expressed in manus and 233 other cell types or tissues"/>
</dbReference>
<dbReference type="GO" id="GO:0005737">
    <property type="term" value="C:cytoplasm"/>
    <property type="evidence" value="ECO:0007669"/>
    <property type="project" value="UniProtKB-SubCell"/>
</dbReference>
<dbReference type="GO" id="GO:0005634">
    <property type="term" value="C:nucleus"/>
    <property type="evidence" value="ECO:0007669"/>
    <property type="project" value="UniProtKB-SubCell"/>
</dbReference>
<dbReference type="GO" id="GO:0003723">
    <property type="term" value="F:RNA binding"/>
    <property type="evidence" value="ECO:0007669"/>
    <property type="project" value="UniProtKB-KW"/>
</dbReference>
<dbReference type="GO" id="GO:0061630">
    <property type="term" value="F:ubiquitin protein ligase activity"/>
    <property type="evidence" value="ECO:0007669"/>
    <property type="project" value="Ensembl"/>
</dbReference>
<dbReference type="GO" id="GO:0008270">
    <property type="term" value="F:zinc ion binding"/>
    <property type="evidence" value="ECO:0007669"/>
    <property type="project" value="UniProtKB-KW"/>
</dbReference>
<dbReference type="GO" id="GO:0003415">
    <property type="term" value="P:chondrocyte hypertrophy"/>
    <property type="evidence" value="ECO:0000315"/>
    <property type="project" value="MGI"/>
</dbReference>
<dbReference type="GO" id="GO:0097009">
    <property type="term" value="P:energy homeostasis"/>
    <property type="evidence" value="ECO:0000315"/>
    <property type="project" value="MGI"/>
</dbReference>
<dbReference type="GO" id="GO:0045598">
    <property type="term" value="P:regulation of fat cell differentiation"/>
    <property type="evidence" value="ECO:0000315"/>
    <property type="project" value="MGI"/>
</dbReference>
<dbReference type="CDD" id="cd22423">
    <property type="entry name" value="KH-I_MEX3_rpt1"/>
    <property type="match status" value="1"/>
</dbReference>
<dbReference type="CDD" id="cd22424">
    <property type="entry name" value="KH-I_MEX3_rpt2"/>
    <property type="match status" value="1"/>
</dbReference>
<dbReference type="CDD" id="cd16722">
    <property type="entry name" value="RING-HC_MEX3C"/>
    <property type="match status" value="1"/>
</dbReference>
<dbReference type="FunFam" id="3.30.1370.10:FF:000013">
    <property type="entry name" value="Mex-3 RNA-binding family member B"/>
    <property type="match status" value="1"/>
</dbReference>
<dbReference type="FunFam" id="3.30.40.10:FF:000090">
    <property type="entry name" value="Mex-3 RNA-binding family member C"/>
    <property type="match status" value="1"/>
</dbReference>
<dbReference type="FunFam" id="3.30.1370.10:FF:000012">
    <property type="entry name" value="Mex-3 RNA-binding family member D"/>
    <property type="match status" value="1"/>
</dbReference>
<dbReference type="Gene3D" id="3.30.1370.10">
    <property type="entry name" value="K Homology domain, type 1"/>
    <property type="match status" value="2"/>
</dbReference>
<dbReference type="Gene3D" id="3.30.40.10">
    <property type="entry name" value="Zinc/RING finger domain, C3HC4 (zinc finger)"/>
    <property type="match status" value="1"/>
</dbReference>
<dbReference type="InterPro" id="IPR047228">
    <property type="entry name" value="KH-I_MEX3_rpt1"/>
</dbReference>
<dbReference type="InterPro" id="IPR047226">
    <property type="entry name" value="KH-I_MEX3_rpt2"/>
</dbReference>
<dbReference type="InterPro" id="IPR004087">
    <property type="entry name" value="KH_dom"/>
</dbReference>
<dbReference type="InterPro" id="IPR004088">
    <property type="entry name" value="KH_dom_type_1"/>
</dbReference>
<dbReference type="InterPro" id="IPR036612">
    <property type="entry name" value="KH_dom_type_1_sf"/>
</dbReference>
<dbReference type="InterPro" id="IPR047227">
    <property type="entry name" value="MEX3"/>
</dbReference>
<dbReference type="InterPro" id="IPR001841">
    <property type="entry name" value="Znf_RING"/>
</dbReference>
<dbReference type="InterPro" id="IPR013083">
    <property type="entry name" value="Znf_RING/FYVE/PHD"/>
</dbReference>
<dbReference type="PANTHER" id="PTHR23285">
    <property type="entry name" value="RING FINGER AND KH DOMAIN CONTAINING PROTEIN 1"/>
    <property type="match status" value="1"/>
</dbReference>
<dbReference type="PANTHER" id="PTHR23285:SF8">
    <property type="entry name" value="RNA-BINDING E3 UBIQUITIN-PROTEIN LIGASE MEX3C"/>
    <property type="match status" value="1"/>
</dbReference>
<dbReference type="Pfam" id="PF00013">
    <property type="entry name" value="KH_1"/>
    <property type="match status" value="2"/>
</dbReference>
<dbReference type="Pfam" id="PF13920">
    <property type="entry name" value="zf-C3HC4_3"/>
    <property type="match status" value="1"/>
</dbReference>
<dbReference type="SMART" id="SM00322">
    <property type="entry name" value="KH"/>
    <property type="match status" value="2"/>
</dbReference>
<dbReference type="SMART" id="SM00184">
    <property type="entry name" value="RING"/>
    <property type="match status" value="1"/>
</dbReference>
<dbReference type="SUPFAM" id="SSF54791">
    <property type="entry name" value="Eukaryotic type KH-domain (KH-domain type I)"/>
    <property type="match status" value="2"/>
</dbReference>
<dbReference type="SUPFAM" id="SSF57850">
    <property type="entry name" value="RING/U-box"/>
    <property type="match status" value="1"/>
</dbReference>
<dbReference type="PROSITE" id="PS50084">
    <property type="entry name" value="KH_TYPE_1"/>
    <property type="match status" value="2"/>
</dbReference>
<dbReference type="PROSITE" id="PS50089">
    <property type="entry name" value="ZF_RING_2"/>
    <property type="match status" value="1"/>
</dbReference>
<keyword id="KW-0963">Cytoplasm</keyword>
<keyword id="KW-0479">Metal-binding</keyword>
<keyword id="KW-0539">Nucleus</keyword>
<keyword id="KW-0597">Phosphoprotein</keyword>
<keyword id="KW-1185">Reference proteome</keyword>
<keyword id="KW-0677">Repeat</keyword>
<keyword id="KW-0694">RNA-binding</keyword>
<keyword id="KW-0808">Transferase</keyword>
<keyword id="KW-0833">Ubl conjugation pathway</keyword>
<keyword id="KW-0862">Zinc</keyword>
<keyword id="KW-0863">Zinc-finger</keyword>
<accession>Q05A36</accession>
<accession>Q2VPQ2</accession>